<proteinExistence type="evidence at transcript level"/>
<comment type="function">
    <text evidence="7">May act as a carbohydrate transporter.</text>
</comment>
<comment type="subcellular location">
    <subcellularLocation>
        <location evidence="7">Symbiosome</location>
        <location evidence="7">Peribacteroid membrane</location>
    </subcellularLocation>
</comment>
<comment type="developmental stage">
    <text>Expressed at early stages of nodule development. Maximal expression is seen in nodules from 14-day-old plants after which levels decrease.</text>
</comment>
<comment type="induction">
    <text>During nodulation in legume roots after Rhizobium infection, and after release of bacteria from the infection thread.</text>
</comment>
<comment type="similarity">
    <text evidence="7">Belongs to the early nodulin-like (ENODL) family.</text>
</comment>
<organism>
    <name type="scientific">Glycine max</name>
    <name type="common">Soybean</name>
    <name type="synonym">Glycine hispida</name>
    <dbReference type="NCBI Taxonomy" id="3847"/>
    <lineage>
        <taxon>Eukaryota</taxon>
        <taxon>Viridiplantae</taxon>
        <taxon>Streptophyta</taxon>
        <taxon>Embryophyta</taxon>
        <taxon>Tracheophyta</taxon>
        <taxon>Spermatophyta</taxon>
        <taxon>Magnoliopsida</taxon>
        <taxon>eudicotyledons</taxon>
        <taxon>Gunneridae</taxon>
        <taxon>Pentapetalae</taxon>
        <taxon>rosids</taxon>
        <taxon>fabids</taxon>
        <taxon>Fabales</taxon>
        <taxon>Fabaceae</taxon>
        <taxon>Papilionoideae</taxon>
        <taxon>50 kb inversion clade</taxon>
        <taxon>NPAAA clade</taxon>
        <taxon>indigoferoid/millettioid clade</taxon>
        <taxon>Phaseoleae</taxon>
        <taxon>Glycine</taxon>
        <taxon>Glycine subgen. Soja</taxon>
    </lineage>
</organism>
<protein>
    <recommendedName>
        <fullName evidence="6">Early nodulin-55-2</fullName>
        <shortName evidence="6">N-55-2</shortName>
    </recommendedName>
    <alternativeName>
        <fullName evidence="5">Nodulin-315</fullName>
    </alternativeName>
</protein>
<reference key="1">
    <citation type="journal article" date="1993" name="Mol. Gen. Genet.">
        <title>Isolation and characterization of novel nodulin cDNAs representing genes expressed at early stages of soybean nodule development.</title>
        <authorList>
            <person name="Kouchi H."/>
            <person name="Hata S."/>
        </authorList>
    </citation>
    <scope>NUCLEOTIDE SEQUENCE [MRNA]</scope>
    <source>
        <strain>cv. Akisengoku</strain>
    </source>
</reference>
<reference key="2">
    <citation type="journal article" date="1993" name="Plant Mol. Biol.">
        <title>Characterization of the soybean early nodulin cDNA clone GmENOD55.</title>
        <authorList>
            <person name="de Blank C."/>
            <person name="Mylona P."/>
            <person name="Yang W.C."/>
            <person name="Katinakis P."/>
            <person name="Bisseling T."/>
            <person name="Franssen H."/>
        </authorList>
    </citation>
    <scope>NUCLEOTIDE SEQUENCE [MRNA]</scope>
    <source>
        <strain>cv. Evans</strain>
    </source>
</reference>
<dbReference type="EMBL" id="D13502">
    <property type="protein sequence ID" value="BAA02720.1"/>
    <property type="molecule type" value="mRNA"/>
</dbReference>
<dbReference type="EMBL" id="X69157">
    <property type="protein sequence ID" value="CAA48909.1"/>
    <property type="molecule type" value="mRNA"/>
</dbReference>
<dbReference type="PIR" id="S34797">
    <property type="entry name" value="S34797"/>
</dbReference>
<dbReference type="PIR" id="S37354">
    <property type="entry name" value="S37354"/>
</dbReference>
<dbReference type="RefSeq" id="NP_001237618.1">
    <property type="nucleotide sequence ID" value="NM_001250689.1"/>
</dbReference>
<dbReference type="RefSeq" id="NP_001238238.1">
    <property type="nucleotide sequence ID" value="NM_001251309.1"/>
</dbReference>
<dbReference type="SMR" id="Q02917"/>
<dbReference type="STRING" id="3847.Q02917"/>
<dbReference type="GlyCosmos" id="Q02917">
    <property type="glycosylation" value="3 sites, No reported glycans"/>
</dbReference>
<dbReference type="PaxDb" id="3847-GLYMA17G08110.1"/>
<dbReference type="GeneID" id="547770"/>
<dbReference type="KEGG" id="gmx:547770"/>
<dbReference type="eggNOG" id="ENOG502RZS4">
    <property type="taxonomic scope" value="Eukaryota"/>
</dbReference>
<dbReference type="InParanoid" id="Q02917"/>
<dbReference type="OrthoDB" id="1937044at2759"/>
<dbReference type="Proteomes" id="UP000008827">
    <property type="component" value="Unplaced"/>
</dbReference>
<dbReference type="GO" id="GO:0043661">
    <property type="term" value="C:peribacteroid membrane"/>
    <property type="evidence" value="ECO:0007669"/>
    <property type="project" value="UniProtKB-SubCell"/>
</dbReference>
<dbReference type="GO" id="GO:0005886">
    <property type="term" value="C:plasma membrane"/>
    <property type="evidence" value="ECO:0000318"/>
    <property type="project" value="GO_Central"/>
</dbReference>
<dbReference type="GO" id="GO:0009055">
    <property type="term" value="F:electron transfer activity"/>
    <property type="evidence" value="ECO:0007669"/>
    <property type="project" value="InterPro"/>
</dbReference>
<dbReference type="GO" id="GO:0009877">
    <property type="term" value="P:nodulation"/>
    <property type="evidence" value="ECO:0007669"/>
    <property type="project" value="UniProtKB-KW"/>
</dbReference>
<dbReference type="CDD" id="cd04216">
    <property type="entry name" value="Phytocyanin"/>
    <property type="match status" value="1"/>
</dbReference>
<dbReference type="FunFam" id="2.60.40.420:FF:000034">
    <property type="entry name" value="Cupredoxin superfamily protein"/>
    <property type="match status" value="1"/>
</dbReference>
<dbReference type="Gene3D" id="2.60.40.420">
    <property type="entry name" value="Cupredoxins - blue copper proteins"/>
    <property type="match status" value="1"/>
</dbReference>
<dbReference type="InterPro" id="IPR008972">
    <property type="entry name" value="Cupredoxin"/>
</dbReference>
<dbReference type="InterPro" id="IPR039391">
    <property type="entry name" value="Phytocyanin-like"/>
</dbReference>
<dbReference type="InterPro" id="IPR003245">
    <property type="entry name" value="Phytocyanin_dom"/>
</dbReference>
<dbReference type="PANTHER" id="PTHR33021">
    <property type="entry name" value="BLUE COPPER PROTEIN"/>
    <property type="match status" value="1"/>
</dbReference>
<dbReference type="PANTHER" id="PTHR33021:SF519">
    <property type="entry name" value="EARLY NODULIN-LIKE PROTEIN 10"/>
    <property type="match status" value="1"/>
</dbReference>
<dbReference type="Pfam" id="PF02298">
    <property type="entry name" value="Cu_bind_like"/>
    <property type="match status" value="1"/>
</dbReference>
<dbReference type="SUPFAM" id="SSF49503">
    <property type="entry name" value="Cupredoxins"/>
    <property type="match status" value="1"/>
</dbReference>
<dbReference type="PROSITE" id="PS51485">
    <property type="entry name" value="PHYTOCYANIN"/>
    <property type="match status" value="1"/>
</dbReference>
<feature type="signal peptide" evidence="1">
    <location>
        <begin position="1"/>
        <end position="26"/>
    </location>
</feature>
<feature type="chain" id="PRO_0000002873" description="Early nodulin-55-2">
    <location>
        <begin position="27"/>
        <end position="187"/>
    </location>
</feature>
<feature type="domain" description="Phytocyanin" evidence="3">
    <location>
        <begin position="27"/>
        <end position="132"/>
    </location>
</feature>
<feature type="region of interest" description="Disordered" evidence="4">
    <location>
        <begin position="138"/>
        <end position="167"/>
    </location>
</feature>
<feature type="compositionally biased region" description="Pro residues" evidence="4">
    <location>
        <begin position="144"/>
        <end position="162"/>
    </location>
</feature>
<feature type="glycosylation site" description="N-linked (GlcNAc...) asparagine" evidence="2">
    <location>
        <position position="78"/>
    </location>
</feature>
<feature type="glycosylation site" description="N-linked (GlcNAc...) asparagine" evidence="2">
    <location>
        <position position="116"/>
    </location>
</feature>
<feature type="glycosylation site" description="N-linked (GlcNAc...) asparagine" evidence="2">
    <location>
        <position position="134"/>
    </location>
</feature>
<feature type="disulfide bond" evidence="3">
    <location>
        <begin position="85"/>
        <end position="120"/>
    </location>
</feature>
<feature type="sequence conflict" description="In Ref. 2; CAA48909." evidence="7" ref="2">
    <original>L</original>
    <variation>F</variation>
    <location>
        <position position="5"/>
    </location>
</feature>
<evidence type="ECO:0000255" key="1"/>
<evidence type="ECO:0000255" key="2">
    <source>
        <dbReference type="PROSITE-ProRule" id="PRU00498"/>
    </source>
</evidence>
<evidence type="ECO:0000255" key="3">
    <source>
        <dbReference type="PROSITE-ProRule" id="PRU00818"/>
    </source>
</evidence>
<evidence type="ECO:0000256" key="4">
    <source>
        <dbReference type="SAM" id="MobiDB-lite"/>
    </source>
</evidence>
<evidence type="ECO:0000303" key="5">
    <source>
    </source>
</evidence>
<evidence type="ECO:0000303" key="6">
    <source>
    </source>
</evidence>
<evidence type="ECO:0000305" key="7"/>
<accession>Q02917</accession>
<accession>Q05545</accession>
<sequence>MASCLPNASPFLVMLAMCLLISTSEAEKYVVGGSEKSWKFPLSKPDSLSHWANSHRFKIGDTLIFKYEKRTESVHEGNETDYEGCNTVGKYHIVFNGGNTKVMLTKPGFRHFISGNQSHCQMGLKLAVLVISSNKTKKNLLSPSPSPSPPPSSLLSPSPSPLPNNQGVTSSSGAGFIGVMMWLMLLL</sequence>
<keyword id="KW-1015">Disulfide bond</keyword>
<keyword id="KW-0325">Glycoprotein</keyword>
<keyword id="KW-0472">Membrane</keyword>
<keyword id="KW-0536">Nodulation</keyword>
<keyword id="KW-1185">Reference proteome</keyword>
<keyword id="KW-0732">Signal</keyword>
<gene>
    <name evidence="6" type="primary">ENOD55-2</name>
</gene>
<name>NO552_SOYBN</name>